<comment type="function">
    <text evidence="3 6 8 11">Ligand for members of the frizzled family of seven transmembrane receptors (Probable). Functions in the canonical Wnt signaling pathway that results in activation of transcription factors of the TCF/LEF family (By similarity). Required for normal gastrulation, formation of the primitive streak, and for the formation of the mesoderm during early embryogenesis (PubMed:10431240). Required for normal formation of the apical ectodermal ridge and for normal embryonic limb development (PubMed:12569130).</text>
</comment>
<comment type="subunit">
    <text evidence="3 7 9">Forms a soluble 1:1 complex with AFM; this prevents oligomerization and is required for prolonged biological activity. The complex with AFM may represent the physiological form in body fluids (By similarity). Interacts with PORCN (PubMed:10866835). Interacts with WLS (PubMed:19841259).</text>
</comment>
<comment type="interaction">
    <interactant intactId="EBI-1570853">
        <id>P17553</id>
    </interactant>
    <interactant intactId="EBI-1570828">
        <id>O35082</id>
        <label>Kl</label>
    </interactant>
    <organismsDiffer>false</organismsDiffer>
    <experiments>4</experiments>
</comment>
<comment type="subcellular location">
    <subcellularLocation>
        <location evidence="3">Secreted</location>
        <location evidence="3">Extracellular space</location>
        <location evidence="3">Extracellular matrix</location>
    </subcellularLocation>
    <subcellularLocation>
        <location evidence="3">Secreted</location>
    </subcellularLocation>
</comment>
<comment type="tissue specificity">
    <text evidence="10">Detected at low levels in adult brain (PubMed:2162045). Dorsal portion of the neural tube, dorsal ectoderm, the branchial arches, and the limb buds.</text>
</comment>
<comment type="developmental stage">
    <text evidence="6 8 9 10">Detected at 6.25 to 7.5 dpc in primitive streak, proximal epiblast, visceral endoderm and at the junction between the embryonic and extraembryonic ectoderm, with higher levels in the posterior region (PubMed:10431240, PubMed:19841259). Detected in the ectoderm at forelimb buds at 9.5 dpc (PubMed:12569130). Detected in all outgrowing limbs and in ectoderm flanking the limbs at least till 11.5 dpc (PubMed:12569130). Highly expressed in embryos at 11.5 and 12.5 dpc, with very low expression levels before and after this period (PubMed:2162045).</text>
</comment>
<comment type="PTM">
    <text evidence="1 4">Palmitoleoylation is required for efficient binding to frizzled receptors. Depalmitoleoylation leads to Wnt signaling pathway inhibition.</text>
</comment>
<comment type="miscellaneous">
    <text evidence="10">Some mouse mammary tumors induced by mouse mammary tumor virus (MMTV) contain a provirus integrated into a host cell region which has been named Wnt3.</text>
</comment>
<comment type="similarity">
    <text evidence="11">Belongs to the Wnt family.</text>
</comment>
<accession>P17553</accession>
<gene>
    <name type="primary">Wnt3</name>
    <name type="synonym">Int-4</name>
    <name type="synonym">Wnt-3</name>
</gene>
<reference key="1">
    <citation type="journal article" date="1990" name="Proc. Natl. Acad. Sci. U.S.A.">
        <title>Wnt-3, a gene activated by proviral insertion in mouse mammary tumors, is homologous to int-1/Wnt-1 and is normally expressed in mouse embryos and adult brain.</title>
        <authorList>
            <person name="Roelink H."/>
            <person name="Wagenaar E."/>
            <person name="Lopes da Silva S."/>
            <person name="Nusse R."/>
        </authorList>
    </citation>
    <scope>NUCLEOTIDE SEQUENCE [MRNA]</scope>
    <scope>TISSUE SPECIFICITY</scope>
    <source>
        <strain>BALB/cJ</strain>
        <tissue>Embryo</tissue>
    </source>
</reference>
<reference key="2">
    <citation type="journal article" date="1999" name="Nat. Genet.">
        <title>Requirement for Wnt3 in vertebrate axis formation.</title>
        <authorList>
            <person name="Liu P."/>
            <person name="Wakamiya M."/>
            <person name="Shea M.J."/>
            <person name="Albrecht U."/>
            <person name="Behringer R.R."/>
            <person name="Bradley A."/>
        </authorList>
    </citation>
    <scope>FUNCTION</scope>
    <scope>DEVELOPMENTAL STAGE</scope>
</reference>
<reference key="3">
    <citation type="journal article" date="2000" name="Eur. J. Biochem.">
        <title>The evolutionarily conserved porcupine gene family is involved in the processing of the Wnt family.</title>
        <authorList>
            <person name="Tanaka K."/>
            <person name="Okabayashi H."/>
            <person name="Asashima M."/>
            <person name="Perrimon N."/>
            <person name="Kadowaki T."/>
        </authorList>
    </citation>
    <scope>INTERACTION WITH PORCN</scope>
</reference>
<reference key="4">
    <citation type="journal article" date="2003" name="Genes Dev.">
        <title>Ectodermal Wnt3/beta-catenin signaling is required for the establishment and maintenance of the apical ectodermal ridge.</title>
        <authorList>
            <person name="Barrow J.R."/>
            <person name="Thomas K.R."/>
            <person name="Boussadia-Zahui O."/>
            <person name="Moore R."/>
            <person name="Kemler R."/>
            <person name="Capecchi M.R."/>
            <person name="McMahon A.P."/>
        </authorList>
    </citation>
    <scope>FUNCTION</scope>
    <scope>DEVELOPMENTAL STAGE</scope>
</reference>
<reference key="5">
    <citation type="journal article" date="2009" name="Proc. Natl. Acad. Sci. U.S.A.">
        <title>Reciprocal regulation of Wnt and Gpr177/mouse Wntless is required for embryonic axis formation.</title>
        <authorList>
            <person name="Fu J."/>
            <person name="Jiang M."/>
            <person name="Mirando A.J."/>
            <person name="Yu H.-M."/>
            <person name="Hsu W."/>
        </authorList>
    </citation>
    <scope>INTERACTION WITH WLS</scope>
    <scope>DEVELOPMENTAL STAGE</scope>
</reference>
<dbReference type="EMBL" id="M32502">
    <property type="protein sequence ID" value="AAB38109.1"/>
    <property type="molecule type" value="mRNA"/>
</dbReference>
<dbReference type="CCDS" id="CCDS25523.1"/>
<dbReference type="PIR" id="A35503">
    <property type="entry name" value="A35503"/>
</dbReference>
<dbReference type="RefSeq" id="NP_033547.1">
    <property type="nucleotide sequence ID" value="NM_009521.3"/>
</dbReference>
<dbReference type="SMR" id="P17553"/>
<dbReference type="BioGRID" id="204574">
    <property type="interactions" value="3"/>
</dbReference>
<dbReference type="DIP" id="DIP-39897N"/>
<dbReference type="FunCoup" id="P17553">
    <property type="interactions" value="431"/>
</dbReference>
<dbReference type="IntAct" id="P17553">
    <property type="interactions" value="2"/>
</dbReference>
<dbReference type="STRING" id="10090.ENSMUSP00000000127"/>
<dbReference type="GlyCosmos" id="P17553">
    <property type="glycosylation" value="2 sites, No reported glycans"/>
</dbReference>
<dbReference type="GlyGen" id="P17553">
    <property type="glycosylation" value="2 sites, 2 N-linked glycans (2 sites)"/>
</dbReference>
<dbReference type="PhosphoSitePlus" id="P17553"/>
<dbReference type="SwissPalm" id="P17553"/>
<dbReference type="PaxDb" id="10090-ENSMUSP00000000127"/>
<dbReference type="ProteomicsDB" id="297854"/>
<dbReference type="Antibodypedia" id="30108">
    <property type="antibodies" value="457 antibodies from 30 providers"/>
</dbReference>
<dbReference type="DNASU" id="22415"/>
<dbReference type="Ensembl" id="ENSMUST00000000127.6">
    <property type="protein sequence ID" value="ENSMUSP00000000127.6"/>
    <property type="gene ID" value="ENSMUSG00000000125.6"/>
</dbReference>
<dbReference type="GeneID" id="22415"/>
<dbReference type="KEGG" id="mmu:22415"/>
<dbReference type="UCSC" id="uc007lvs.2">
    <property type="organism name" value="mouse"/>
</dbReference>
<dbReference type="AGR" id="MGI:98955"/>
<dbReference type="CTD" id="7473"/>
<dbReference type="MGI" id="MGI:98955">
    <property type="gene designation" value="Wnt3"/>
</dbReference>
<dbReference type="VEuPathDB" id="HostDB:ENSMUSG00000000125"/>
<dbReference type="eggNOG" id="KOG3913">
    <property type="taxonomic scope" value="Eukaryota"/>
</dbReference>
<dbReference type="GeneTree" id="ENSGT00940000157854"/>
<dbReference type="HOGENOM" id="CLU_033039_1_0_1"/>
<dbReference type="InParanoid" id="P17553"/>
<dbReference type="OMA" id="WNCTTIE"/>
<dbReference type="OrthoDB" id="5945655at2759"/>
<dbReference type="PhylomeDB" id="P17553"/>
<dbReference type="TreeFam" id="TF105310"/>
<dbReference type="Reactome" id="R-MMU-201681">
    <property type="pathway name" value="TCF dependent signaling in response to WNT"/>
</dbReference>
<dbReference type="Reactome" id="R-MMU-3238698">
    <property type="pathway name" value="WNT ligand biogenesis and trafficking"/>
</dbReference>
<dbReference type="BioGRID-ORCS" id="22415">
    <property type="hits" value="1 hit in 80 CRISPR screens"/>
</dbReference>
<dbReference type="PRO" id="PR:P17553"/>
<dbReference type="Proteomes" id="UP000000589">
    <property type="component" value="Chromosome 11"/>
</dbReference>
<dbReference type="RNAct" id="P17553">
    <property type="molecule type" value="protein"/>
</dbReference>
<dbReference type="Bgee" id="ENSMUSG00000000125">
    <property type="expression patterns" value="Expressed in external ectoderm and 74 other cell types or tissues"/>
</dbReference>
<dbReference type="ExpressionAtlas" id="P17553">
    <property type="expression patterns" value="baseline and differential"/>
</dbReference>
<dbReference type="GO" id="GO:0005788">
    <property type="term" value="C:endoplasmic reticulum lumen"/>
    <property type="evidence" value="ECO:0000304"/>
    <property type="project" value="Reactome"/>
</dbReference>
<dbReference type="GO" id="GO:0031012">
    <property type="term" value="C:extracellular matrix"/>
    <property type="evidence" value="ECO:0000314"/>
    <property type="project" value="MGI"/>
</dbReference>
<dbReference type="GO" id="GO:0005576">
    <property type="term" value="C:extracellular region"/>
    <property type="evidence" value="ECO:0007669"/>
    <property type="project" value="UniProtKB-SubCell"/>
</dbReference>
<dbReference type="GO" id="GO:0005109">
    <property type="term" value="F:frizzled binding"/>
    <property type="evidence" value="ECO:0007669"/>
    <property type="project" value="Ensembl"/>
</dbReference>
<dbReference type="GO" id="GO:0019904">
    <property type="term" value="F:protein domain specific binding"/>
    <property type="evidence" value="ECO:0000353"/>
    <property type="project" value="UniProtKB"/>
</dbReference>
<dbReference type="GO" id="GO:0048018">
    <property type="term" value="F:receptor ligand activity"/>
    <property type="evidence" value="ECO:0007669"/>
    <property type="project" value="Ensembl"/>
</dbReference>
<dbReference type="GO" id="GO:0005102">
    <property type="term" value="F:signaling receptor binding"/>
    <property type="evidence" value="ECO:0000304"/>
    <property type="project" value="MGI"/>
</dbReference>
<dbReference type="GO" id="GO:0048646">
    <property type="term" value="P:anatomical structure formation involved in morphogenesis"/>
    <property type="evidence" value="ECO:0000315"/>
    <property type="project" value="MGI"/>
</dbReference>
<dbReference type="GO" id="GO:0009887">
    <property type="term" value="P:animal organ morphogenesis"/>
    <property type="evidence" value="ECO:0000304"/>
    <property type="project" value="MGI"/>
</dbReference>
<dbReference type="GO" id="GO:0009948">
    <property type="term" value="P:anterior/posterior axis specification"/>
    <property type="evidence" value="ECO:0000315"/>
    <property type="project" value="MGI"/>
</dbReference>
<dbReference type="GO" id="GO:0009952">
    <property type="term" value="P:anterior/posterior pattern specification"/>
    <property type="evidence" value="ECO:0000315"/>
    <property type="project" value="MGI"/>
</dbReference>
<dbReference type="GO" id="GO:0007411">
    <property type="term" value="P:axon guidance"/>
    <property type="evidence" value="ECO:0000314"/>
    <property type="project" value="MGI"/>
</dbReference>
<dbReference type="GO" id="GO:0060070">
    <property type="term" value="P:canonical Wnt signaling pathway"/>
    <property type="evidence" value="ECO:0000316"/>
    <property type="project" value="MGI"/>
</dbReference>
<dbReference type="GO" id="GO:0007267">
    <property type="term" value="P:cell-cell signaling"/>
    <property type="evidence" value="ECO:0000304"/>
    <property type="project" value="MGI"/>
</dbReference>
<dbReference type="GO" id="GO:0009950">
    <property type="term" value="P:dorsal/ventral axis specification"/>
    <property type="evidence" value="ECO:0000315"/>
    <property type="project" value="MGI"/>
</dbReference>
<dbReference type="GO" id="GO:0035115">
    <property type="term" value="P:embryonic forelimb morphogenesis"/>
    <property type="evidence" value="ECO:0000315"/>
    <property type="project" value="MGI"/>
</dbReference>
<dbReference type="GO" id="GO:0035116">
    <property type="term" value="P:embryonic hindlimb morphogenesis"/>
    <property type="evidence" value="ECO:0000315"/>
    <property type="project" value="MGI"/>
</dbReference>
<dbReference type="GO" id="GO:0007276">
    <property type="term" value="P:gamete generation"/>
    <property type="evidence" value="ECO:0000316"/>
    <property type="project" value="MGI"/>
</dbReference>
<dbReference type="GO" id="GO:0010467">
    <property type="term" value="P:gene expression"/>
    <property type="evidence" value="ECO:0000314"/>
    <property type="project" value="MGI"/>
</dbReference>
<dbReference type="GO" id="GO:0060323">
    <property type="term" value="P:head morphogenesis"/>
    <property type="evidence" value="ECO:0000316"/>
    <property type="project" value="MGI"/>
</dbReference>
<dbReference type="GO" id="GO:0060174">
    <property type="term" value="P:limb bud formation"/>
    <property type="evidence" value="ECO:0007669"/>
    <property type="project" value="Ensembl"/>
</dbReference>
<dbReference type="GO" id="GO:0060173">
    <property type="term" value="P:limb development"/>
    <property type="evidence" value="ECO:0000315"/>
    <property type="project" value="MGI"/>
</dbReference>
<dbReference type="GO" id="GO:0061180">
    <property type="term" value="P:mammary gland epithelium development"/>
    <property type="evidence" value="ECO:0007669"/>
    <property type="project" value="Ensembl"/>
</dbReference>
<dbReference type="GO" id="GO:0001707">
    <property type="term" value="P:mesoderm formation"/>
    <property type="evidence" value="ECO:0000315"/>
    <property type="project" value="MGI"/>
</dbReference>
<dbReference type="GO" id="GO:1904948">
    <property type="term" value="P:midbrain dopaminergic neuron differentiation"/>
    <property type="evidence" value="ECO:0007669"/>
    <property type="project" value="Ensembl"/>
</dbReference>
<dbReference type="GO" id="GO:0048843">
    <property type="term" value="P:negative regulation of axon extension involved in axon guidance"/>
    <property type="evidence" value="ECO:0000314"/>
    <property type="project" value="MGI"/>
</dbReference>
<dbReference type="GO" id="GO:0048697">
    <property type="term" value="P:positive regulation of collateral sprouting in absence of injury"/>
    <property type="evidence" value="ECO:0000314"/>
    <property type="project" value="MGI"/>
</dbReference>
<dbReference type="GO" id="GO:0010628">
    <property type="term" value="P:positive regulation of gene expression"/>
    <property type="evidence" value="ECO:0000314"/>
    <property type="project" value="MGI"/>
</dbReference>
<dbReference type="GO" id="GO:0045669">
    <property type="term" value="P:positive regulation of osteoblast differentiation"/>
    <property type="evidence" value="ECO:0007669"/>
    <property type="project" value="Ensembl"/>
</dbReference>
<dbReference type="GO" id="GO:0030177">
    <property type="term" value="P:positive regulation of Wnt signaling pathway"/>
    <property type="evidence" value="ECO:0000314"/>
    <property type="project" value="CACAO"/>
</dbReference>
<dbReference type="GO" id="GO:2000739">
    <property type="term" value="P:regulation of mesenchymal stem cell differentiation"/>
    <property type="evidence" value="ECO:0007669"/>
    <property type="project" value="Ensembl"/>
</dbReference>
<dbReference type="GO" id="GO:0007165">
    <property type="term" value="P:signal transduction"/>
    <property type="evidence" value="ECO:0000304"/>
    <property type="project" value="MGI"/>
</dbReference>
<dbReference type="GO" id="GO:0060064">
    <property type="term" value="P:Spemann organizer formation at the anterior end of the primitive streak"/>
    <property type="evidence" value="ECO:0000315"/>
    <property type="project" value="MGI"/>
</dbReference>
<dbReference type="GO" id="GO:0072089">
    <property type="term" value="P:stem cell proliferation"/>
    <property type="evidence" value="ECO:0007669"/>
    <property type="project" value="Ensembl"/>
</dbReference>
<dbReference type="CDD" id="cd19335">
    <property type="entry name" value="Wnt_Wnt3_Wnt3a"/>
    <property type="match status" value="1"/>
</dbReference>
<dbReference type="FunFam" id="3.30.2460.20:FF:000001">
    <property type="entry name" value="Wnt homolog"/>
    <property type="match status" value="1"/>
</dbReference>
<dbReference type="Gene3D" id="3.30.2460.20">
    <property type="match status" value="1"/>
</dbReference>
<dbReference type="InterPro" id="IPR005817">
    <property type="entry name" value="Wnt"/>
</dbReference>
<dbReference type="InterPro" id="IPR009141">
    <property type="entry name" value="Wnt3"/>
</dbReference>
<dbReference type="InterPro" id="IPR043158">
    <property type="entry name" value="Wnt_C"/>
</dbReference>
<dbReference type="InterPro" id="IPR018161">
    <property type="entry name" value="Wnt_CS"/>
</dbReference>
<dbReference type="PANTHER" id="PTHR12027:SF82">
    <property type="entry name" value="PROTO-ONCOGENE WNT-3"/>
    <property type="match status" value="1"/>
</dbReference>
<dbReference type="PANTHER" id="PTHR12027">
    <property type="entry name" value="WNT RELATED"/>
    <property type="match status" value="1"/>
</dbReference>
<dbReference type="Pfam" id="PF00110">
    <property type="entry name" value="wnt"/>
    <property type="match status" value="1"/>
</dbReference>
<dbReference type="PRINTS" id="PR01843">
    <property type="entry name" value="WNT3PROTEIN"/>
</dbReference>
<dbReference type="PRINTS" id="PR01349">
    <property type="entry name" value="WNTPROTEIN"/>
</dbReference>
<dbReference type="SMART" id="SM00097">
    <property type="entry name" value="WNT1"/>
    <property type="match status" value="1"/>
</dbReference>
<dbReference type="PROSITE" id="PS00246">
    <property type="entry name" value="WNT1"/>
    <property type="match status" value="1"/>
</dbReference>
<name>WNT3_MOUSE</name>
<sequence length="355" mass="39659">MEPHLLGLLLGLLLSGTRVLAGYPIWWSLALGQQYTSLASQPLLCGSIPGLVPKQLRFCRNYIEIMPSVAEGVKLGIQECQHQFRGRRWNCTTIDDSLAIFGPVLDKATRESAFVHAIASAGVAFAVTRSCAEGTSTICGCDSHHKGPPGEGWKWGGCSEDADFGVLVSREFADARENRPDARSAMNKHNNEAGRTTILDHMHLKCKCHGLSGSCEVKTCWWAQPDFRAIGDFLKDKYDSASEMVVEKHRESRGWVETLRAKYALFKPPTERDLVYYENSPNFCEPNPETGSFGTRDRTCNVTSHGIDGCDLLCCGRGHNTRTEKRKEKCHCVFHWCCYVSCQECIRIYDVHTCK</sequence>
<organism>
    <name type="scientific">Mus musculus</name>
    <name type="common">Mouse</name>
    <dbReference type="NCBI Taxonomy" id="10090"/>
    <lineage>
        <taxon>Eukaryota</taxon>
        <taxon>Metazoa</taxon>
        <taxon>Chordata</taxon>
        <taxon>Craniata</taxon>
        <taxon>Vertebrata</taxon>
        <taxon>Euteleostomi</taxon>
        <taxon>Mammalia</taxon>
        <taxon>Eutheria</taxon>
        <taxon>Euarchontoglires</taxon>
        <taxon>Glires</taxon>
        <taxon>Rodentia</taxon>
        <taxon>Myomorpha</taxon>
        <taxon>Muroidea</taxon>
        <taxon>Muridae</taxon>
        <taxon>Murinae</taxon>
        <taxon>Mus</taxon>
        <taxon>Mus</taxon>
    </lineage>
</organism>
<proteinExistence type="evidence at protein level"/>
<keyword id="KW-0217">Developmental protein</keyword>
<keyword id="KW-1015">Disulfide bond</keyword>
<keyword id="KW-0272">Extracellular matrix</keyword>
<keyword id="KW-0325">Glycoprotein</keyword>
<keyword id="KW-0449">Lipoprotein</keyword>
<keyword id="KW-0656">Proto-oncogene</keyword>
<keyword id="KW-1185">Reference proteome</keyword>
<keyword id="KW-0964">Secreted</keyword>
<keyword id="KW-0732">Signal</keyword>
<keyword id="KW-0879">Wnt signaling pathway</keyword>
<evidence type="ECO:0000250" key="1">
    <source>
        <dbReference type="UniProtKB" id="P27467"/>
    </source>
</evidence>
<evidence type="ECO:0000250" key="2">
    <source>
        <dbReference type="UniProtKB" id="P28026"/>
    </source>
</evidence>
<evidence type="ECO:0000250" key="3">
    <source>
        <dbReference type="UniProtKB" id="P56703"/>
    </source>
</evidence>
<evidence type="ECO:0000250" key="4">
    <source>
        <dbReference type="UniProtKB" id="P56704"/>
    </source>
</evidence>
<evidence type="ECO:0000255" key="5"/>
<evidence type="ECO:0000269" key="6">
    <source>
    </source>
</evidence>
<evidence type="ECO:0000269" key="7">
    <source>
    </source>
</evidence>
<evidence type="ECO:0000269" key="8">
    <source>
    </source>
</evidence>
<evidence type="ECO:0000269" key="9">
    <source>
    </source>
</evidence>
<evidence type="ECO:0000269" key="10">
    <source>
    </source>
</evidence>
<evidence type="ECO:0000305" key="11"/>
<protein>
    <recommendedName>
        <fullName>Proto-oncogene Wnt-3</fullName>
    </recommendedName>
    <alternativeName>
        <fullName>Proto-oncogene Int-4</fullName>
    </alternativeName>
</protein>
<feature type="signal peptide" evidence="5">
    <location>
        <begin position="1"/>
        <end position="21"/>
    </location>
</feature>
<feature type="chain" id="PRO_0000041417" description="Proto-oncogene Wnt-3">
    <location>
        <begin position="22"/>
        <end position="355"/>
    </location>
</feature>
<feature type="lipid moiety-binding region" description="O-palmitoleoyl serine; by PORCN" evidence="4">
    <location>
        <position position="212"/>
    </location>
</feature>
<feature type="glycosylation site" description="N-linked (GlcNAc...) asparagine" evidence="5">
    <location>
        <position position="90"/>
    </location>
</feature>
<feature type="glycosylation site" description="N-linked (GlcNAc...) asparagine" evidence="5">
    <location>
        <position position="301"/>
    </location>
</feature>
<feature type="disulfide bond" evidence="2">
    <location>
        <begin position="80"/>
        <end position="91"/>
    </location>
</feature>
<feature type="disulfide bond" evidence="2">
    <location>
        <begin position="131"/>
        <end position="139"/>
    </location>
</feature>
<feature type="disulfide bond" evidence="2">
    <location>
        <begin position="141"/>
        <end position="158"/>
    </location>
</feature>
<feature type="disulfide bond" evidence="2">
    <location>
        <begin position="206"/>
        <end position="220"/>
    </location>
</feature>
<feature type="disulfide bond" evidence="2">
    <location>
        <begin position="208"/>
        <end position="215"/>
    </location>
</feature>
<feature type="disulfide bond" evidence="2">
    <location>
        <begin position="284"/>
        <end position="315"/>
    </location>
</feature>
<feature type="disulfide bond" evidence="2">
    <location>
        <begin position="300"/>
        <end position="310"/>
    </location>
</feature>
<feature type="disulfide bond" evidence="2">
    <location>
        <begin position="314"/>
        <end position="354"/>
    </location>
</feature>
<feature type="disulfide bond" evidence="2">
    <location>
        <begin position="330"/>
        <end position="345"/>
    </location>
</feature>
<feature type="disulfide bond" evidence="2">
    <location>
        <begin position="332"/>
        <end position="342"/>
    </location>
</feature>
<feature type="disulfide bond" evidence="2">
    <location>
        <begin position="337"/>
        <end position="338"/>
    </location>
</feature>